<keyword id="KW-0997">Cell inner membrane</keyword>
<keyword id="KW-1003">Cell membrane</keyword>
<keyword id="KW-0472">Membrane</keyword>
<keyword id="KW-1185">Reference proteome</keyword>
<sequence length="86" mass="9695">MRLLARLIALPVRGYRLLFSPWVGFNCRYQPTCSAYALDALERHGPFKGTYLMLRRIGRCHPFGGSGYDPVPGADPKHDRCCGRTP</sequence>
<protein>
    <recommendedName>
        <fullName evidence="1">Putative membrane protein insertion efficiency factor</fullName>
    </recommendedName>
</protein>
<name>YIDD_RUEST</name>
<evidence type="ECO:0000255" key="1">
    <source>
        <dbReference type="HAMAP-Rule" id="MF_00386"/>
    </source>
</evidence>
<dbReference type="EMBL" id="CP000377">
    <property type="protein sequence ID" value="ABF63044.1"/>
    <property type="molecule type" value="Genomic_DNA"/>
</dbReference>
<dbReference type="RefSeq" id="WP_011537660.1">
    <property type="nucleotide sequence ID" value="NC_008044.1"/>
</dbReference>
<dbReference type="STRING" id="292414.TM1040_0311"/>
<dbReference type="KEGG" id="sit:TM1040_0311"/>
<dbReference type="eggNOG" id="COG0759">
    <property type="taxonomic scope" value="Bacteria"/>
</dbReference>
<dbReference type="HOGENOM" id="CLU_144811_5_3_5"/>
<dbReference type="OrthoDB" id="9801753at2"/>
<dbReference type="Proteomes" id="UP000000636">
    <property type="component" value="Chromosome"/>
</dbReference>
<dbReference type="GO" id="GO:0005886">
    <property type="term" value="C:plasma membrane"/>
    <property type="evidence" value="ECO:0007669"/>
    <property type="project" value="UniProtKB-SubCell"/>
</dbReference>
<dbReference type="HAMAP" id="MF_00386">
    <property type="entry name" value="UPF0161_YidD"/>
    <property type="match status" value="1"/>
</dbReference>
<dbReference type="InterPro" id="IPR002696">
    <property type="entry name" value="Membr_insert_effic_factor_YidD"/>
</dbReference>
<dbReference type="NCBIfam" id="TIGR00278">
    <property type="entry name" value="membrane protein insertion efficiency factor YidD"/>
    <property type="match status" value="1"/>
</dbReference>
<dbReference type="PANTHER" id="PTHR33383">
    <property type="entry name" value="MEMBRANE PROTEIN INSERTION EFFICIENCY FACTOR-RELATED"/>
    <property type="match status" value="1"/>
</dbReference>
<dbReference type="PANTHER" id="PTHR33383:SF1">
    <property type="entry name" value="MEMBRANE PROTEIN INSERTION EFFICIENCY FACTOR-RELATED"/>
    <property type="match status" value="1"/>
</dbReference>
<dbReference type="Pfam" id="PF01809">
    <property type="entry name" value="YidD"/>
    <property type="match status" value="1"/>
</dbReference>
<dbReference type="SMART" id="SM01234">
    <property type="entry name" value="Haemolytic"/>
    <property type="match status" value="1"/>
</dbReference>
<feature type="chain" id="PRO_0000253170" description="Putative membrane protein insertion efficiency factor">
    <location>
        <begin position="1"/>
        <end position="86"/>
    </location>
</feature>
<comment type="function">
    <text evidence="1">Could be involved in insertion of integral membrane proteins into the membrane.</text>
</comment>
<comment type="subcellular location">
    <subcellularLocation>
        <location evidence="1">Cell inner membrane</location>
        <topology evidence="1">Peripheral membrane protein</topology>
        <orientation evidence="1">Cytoplasmic side</orientation>
    </subcellularLocation>
</comment>
<comment type="similarity">
    <text evidence="1">Belongs to the UPF0161 family.</text>
</comment>
<accession>Q1GJX2</accession>
<organism>
    <name type="scientific">Ruegeria sp. (strain TM1040)</name>
    <name type="common">Silicibacter sp.</name>
    <dbReference type="NCBI Taxonomy" id="292414"/>
    <lineage>
        <taxon>Bacteria</taxon>
        <taxon>Pseudomonadati</taxon>
        <taxon>Pseudomonadota</taxon>
        <taxon>Alphaproteobacteria</taxon>
        <taxon>Rhodobacterales</taxon>
        <taxon>Roseobacteraceae</taxon>
        <taxon>Ruegeria</taxon>
    </lineage>
</organism>
<proteinExistence type="inferred from homology"/>
<gene>
    <name type="ordered locus">TM1040_0311</name>
</gene>
<reference key="1">
    <citation type="submission" date="2006-05" db="EMBL/GenBank/DDBJ databases">
        <title>Complete sequence of chromosome of Silicibacter sp. TM1040.</title>
        <authorList>
            <consortium name="US DOE Joint Genome Institute"/>
            <person name="Copeland A."/>
            <person name="Lucas S."/>
            <person name="Lapidus A."/>
            <person name="Barry K."/>
            <person name="Detter J.C."/>
            <person name="Glavina del Rio T."/>
            <person name="Hammon N."/>
            <person name="Israni S."/>
            <person name="Dalin E."/>
            <person name="Tice H."/>
            <person name="Pitluck S."/>
            <person name="Brettin T."/>
            <person name="Bruce D."/>
            <person name="Han C."/>
            <person name="Tapia R."/>
            <person name="Goodwin L."/>
            <person name="Thompson L.S."/>
            <person name="Gilna P."/>
            <person name="Schmutz J."/>
            <person name="Larimer F."/>
            <person name="Land M."/>
            <person name="Hauser L."/>
            <person name="Kyrpides N."/>
            <person name="Kim E."/>
            <person name="Belas R."/>
            <person name="Moran M.A."/>
            <person name="Buchan A."/>
            <person name="Gonzalez J.M."/>
            <person name="Schell M.A."/>
            <person name="Sun F."/>
            <person name="Richardson P."/>
        </authorList>
    </citation>
    <scope>NUCLEOTIDE SEQUENCE [LARGE SCALE GENOMIC DNA]</scope>
    <source>
        <strain>TM1040</strain>
    </source>
</reference>